<reference key="1">
    <citation type="journal article" date="2004" name="PLoS Biol.">
        <title>Phylogenomics of the reproductive parasite Wolbachia pipientis wMel: a streamlined genome overrun by mobile genetic elements.</title>
        <authorList>
            <person name="Wu M."/>
            <person name="Sun L.V."/>
            <person name="Vamathevan J.J."/>
            <person name="Riegler M."/>
            <person name="DeBoy R.T."/>
            <person name="Brownlie J.C."/>
            <person name="McGraw E.A."/>
            <person name="Martin W."/>
            <person name="Esser C."/>
            <person name="Ahmadinejad N."/>
            <person name="Wiegand C."/>
            <person name="Madupu R."/>
            <person name="Beanan M.J."/>
            <person name="Brinkac L.M."/>
            <person name="Daugherty S.C."/>
            <person name="Durkin A.S."/>
            <person name="Kolonay J.F."/>
            <person name="Nelson W.C."/>
            <person name="Mohamoud Y."/>
            <person name="Lee P."/>
            <person name="Berry K.J."/>
            <person name="Young M.B."/>
            <person name="Utterback T.R."/>
            <person name="Weidman J.F."/>
            <person name="Nierman W.C."/>
            <person name="Paulsen I.T."/>
            <person name="Nelson K.E."/>
            <person name="Tettelin H."/>
            <person name="O'Neill S.L."/>
            <person name="Eisen J.A."/>
        </authorList>
    </citation>
    <scope>NUCLEOTIDE SEQUENCE [LARGE SCALE GENOMIC DNA]</scope>
</reference>
<keyword id="KW-0067">ATP-binding</keyword>
<keyword id="KW-1003">Cell membrane</keyword>
<keyword id="KW-0406">Ion transport</keyword>
<keyword id="KW-0472">Membrane</keyword>
<keyword id="KW-0547">Nucleotide-binding</keyword>
<keyword id="KW-1278">Translocase</keyword>
<keyword id="KW-0813">Transport</keyword>
<keyword id="KW-0862">Zinc</keyword>
<keyword id="KW-0864">Zinc transport</keyword>
<protein>
    <recommendedName>
        <fullName evidence="1">Zinc import ATP-binding protein ZnuC</fullName>
        <ecNumber evidence="1">7.2.2.20</ecNumber>
    </recommendedName>
</protein>
<name>ZNUC_WOLPM</name>
<proteinExistence type="inferred from homology"/>
<evidence type="ECO:0000255" key="1">
    <source>
        <dbReference type="HAMAP-Rule" id="MF_01725"/>
    </source>
</evidence>
<evidence type="ECO:0000305" key="2"/>
<sequence length="246" mass="27452">MSHINVEKKLNFVNKLNNVNNRVLKIENLALAYDGKRILDNINMFMERGDIITILGPNGGGKTSLVKAIAGINKNYTGNIVLAENTKISYMPQNFSISNLMPITVEYFLLNSSFKRLKKNQSIITETIELAGIGNILKNQVLEISAGQTQLLLLARCLIAEPDLIILDEPVSAMDINARAKFYDIINKIAKKRLVSILMTSHDLNSALPSSDYIICINNTIYCQGKPDEIMKNRTLNEIFSSYAAK</sequence>
<feature type="chain" id="PRO_0000281566" description="Zinc import ATP-binding protein ZnuC">
    <location>
        <begin position="1"/>
        <end position="246"/>
    </location>
</feature>
<feature type="domain" description="ABC transporter" evidence="1">
    <location>
        <begin position="24"/>
        <end position="243"/>
    </location>
</feature>
<feature type="binding site" evidence="1">
    <location>
        <begin position="56"/>
        <end position="63"/>
    </location>
    <ligand>
        <name>ATP</name>
        <dbReference type="ChEBI" id="CHEBI:30616"/>
    </ligand>
</feature>
<dbReference type="EC" id="7.2.2.20" evidence="1"/>
<dbReference type="EMBL" id="AE017196">
    <property type="protein sequence ID" value="AAS14607.1"/>
    <property type="status" value="ALT_INIT"/>
    <property type="molecule type" value="Genomic_DNA"/>
</dbReference>
<dbReference type="RefSeq" id="WP_022626380.1">
    <property type="nucleotide sequence ID" value="NZ_OX384529.1"/>
</dbReference>
<dbReference type="SMR" id="Q73GK9"/>
<dbReference type="EnsemblBacteria" id="AAS14607">
    <property type="protein sequence ID" value="AAS14607"/>
    <property type="gene ID" value="WD_0938"/>
</dbReference>
<dbReference type="KEGG" id="wol:WD_0938"/>
<dbReference type="eggNOG" id="COG1121">
    <property type="taxonomic scope" value="Bacteria"/>
</dbReference>
<dbReference type="Proteomes" id="UP000008215">
    <property type="component" value="Chromosome"/>
</dbReference>
<dbReference type="GO" id="GO:0005886">
    <property type="term" value="C:plasma membrane"/>
    <property type="evidence" value="ECO:0007669"/>
    <property type="project" value="UniProtKB-SubCell"/>
</dbReference>
<dbReference type="GO" id="GO:0015633">
    <property type="term" value="F:ABC-type zinc transporter activity"/>
    <property type="evidence" value="ECO:0007669"/>
    <property type="project" value="UniProtKB-EC"/>
</dbReference>
<dbReference type="GO" id="GO:0005524">
    <property type="term" value="F:ATP binding"/>
    <property type="evidence" value="ECO:0007669"/>
    <property type="project" value="UniProtKB-KW"/>
</dbReference>
<dbReference type="GO" id="GO:0016887">
    <property type="term" value="F:ATP hydrolysis activity"/>
    <property type="evidence" value="ECO:0007669"/>
    <property type="project" value="InterPro"/>
</dbReference>
<dbReference type="Gene3D" id="3.40.50.300">
    <property type="entry name" value="P-loop containing nucleotide triphosphate hydrolases"/>
    <property type="match status" value="1"/>
</dbReference>
<dbReference type="InterPro" id="IPR003593">
    <property type="entry name" value="AAA+_ATPase"/>
</dbReference>
<dbReference type="InterPro" id="IPR003439">
    <property type="entry name" value="ABC_transporter-like_ATP-bd"/>
</dbReference>
<dbReference type="InterPro" id="IPR050153">
    <property type="entry name" value="Metal_Ion_Import_ABC"/>
</dbReference>
<dbReference type="InterPro" id="IPR027417">
    <property type="entry name" value="P-loop_NTPase"/>
</dbReference>
<dbReference type="PANTHER" id="PTHR42734">
    <property type="entry name" value="METAL TRANSPORT SYSTEM ATP-BINDING PROTEIN TM_0124-RELATED"/>
    <property type="match status" value="1"/>
</dbReference>
<dbReference type="PANTHER" id="PTHR42734:SF17">
    <property type="entry name" value="METAL TRANSPORT SYSTEM ATP-BINDING PROTEIN TM_0124-RELATED"/>
    <property type="match status" value="1"/>
</dbReference>
<dbReference type="Pfam" id="PF00005">
    <property type="entry name" value="ABC_tran"/>
    <property type="match status" value="1"/>
</dbReference>
<dbReference type="SMART" id="SM00382">
    <property type="entry name" value="AAA"/>
    <property type="match status" value="1"/>
</dbReference>
<dbReference type="SUPFAM" id="SSF52540">
    <property type="entry name" value="P-loop containing nucleoside triphosphate hydrolases"/>
    <property type="match status" value="1"/>
</dbReference>
<dbReference type="PROSITE" id="PS50893">
    <property type="entry name" value="ABC_TRANSPORTER_2"/>
    <property type="match status" value="1"/>
</dbReference>
<dbReference type="PROSITE" id="PS51298">
    <property type="entry name" value="ZNUC"/>
    <property type="match status" value="1"/>
</dbReference>
<organism>
    <name type="scientific">Wolbachia pipientis wMel</name>
    <dbReference type="NCBI Taxonomy" id="163164"/>
    <lineage>
        <taxon>Bacteria</taxon>
        <taxon>Pseudomonadati</taxon>
        <taxon>Pseudomonadota</taxon>
        <taxon>Alphaproteobacteria</taxon>
        <taxon>Rickettsiales</taxon>
        <taxon>Anaplasmataceae</taxon>
        <taxon>Wolbachieae</taxon>
        <taxon>Wolbachia</taxon>
    </lineage>
</organism>
<gene>
    <name evidence="1" type="primary">znuC</name>
    <name type="ordered locus">WD_0938</name>
</gene>
<comment type="function">
    <text evidence="1">Part of the ABC transporter complex ZnuABC involved in zinc import. Responsible for energy coupling to the transport system.</text>
</comment>
<comment type="catalytic activity">
    <reaction evidence="1">
        <text>Zn(2+)(out) + ATP(in) + H2O(in) = Zn(2+)(in) + ADP(in) + phosphate(in) + H(+)(in)</text>
        <dbReference type="Rhea" id="RHEA:29795"/>
        <dbReference type="ChEBI" id="CHEBI:15377"/>
        <dbReference type="ChEBI" id="CHEBI:15378"/>
        <dbReference type="ChEBI" id="CHEBI:29105"/>
        <dbReference type="ChEBI" id="CHEBI:30616"/>
        <dbReference type="ChEBI" id="CHEBI:43474"/>
        <dbReference type="ChEBI" id="CHEBI:456216"/>
        <dbReference type="EC" id="7.2.2.20"/>
    </reaction>
</comment>
<comment type="subunit">
    <text evidence="1">The complex is composed of two ATP-binding proteins (ZnuC), two transmembrane proteins (ZnuB) and a solute-binding protein (ZnuA).</text>
</comment>
<comment type="subcellular location">
    <subcellularLocation>
        <location evidence="1">Cell membrane</location>
        <topology evidence="1">Peripheral membrane protein</topology>
    </subcellularLocation>
</comment>
<comment type="similarity">
    <text evidence="1">Belongs to the ABC transporter superfamily. Zinc importer (TC 3.A.1.15.5) family.</text>
</comment>
<comment type="sequence caution" evidence="2">
    <conflict type="erroneous initiation">
        <sequence resource="EMBL-CDS" id="AAS14607"/>
    </conflict>
</comment>
<accession>Q73GK9</accession>